<sequence length="497" mass="55181">MGARASVLSGGKLDSWEKIRLRPGGRKKYKLKHIVWASRELGRFALNRDLLETAEGCVQIMKQLQPALTGTEELRSLFNTVATLYCVHQKIEVKDTKEAPEEVEKIQKNSQQEIQQAAKNEGNSNPVSQNYPIVQNAQGQMIHQAISPWTLNAWVKVVEEKAFSPEVIPMFSALSEGATPQDLNTMLNTVGGHQAAMQMLKDTINDEAAEWDRIHPQQAGPIPPGQIREPSGSDIAGTTSTLQEQIRWMTSNPPIPVGEIYKRWIILGLNKIVRMYSPVSILDIRQGPKEPFRDYVDRFFKTLRAEQATQEVKGWMTDTLLVQNANPDCKTILRALGPGATLEEMMTACQGVGGPSHKARVLAEAMSQASGAAAAAIMMQKSNFKGPRRIIKCFNCGKEGHLARNCRAPRKKGCWKCGKEGHQMKECTERQANFLGKIWPSNKGRPGNFLQNRTEPTAPPAESFGFGEEIAPSPKQEPKEKELYPLTSLKSLFGSDP</sequence>
<name>GAG_HV19N</name>
<comment type="function">
    <molecule>Gag polyprotein</molecule>
    <text evidence="5">Mediates, with Gag-Pol polyprotein, the essential events in virion assembly, including binding the plasma membrane, making the protein-protein interactions necessary to create spherical particles, recruiting the viral Env proteins, and packaging the genomic RNA via direct interactions with the RNA packaging sequence (Psi).</text>
</comment>
<comment type="function">
    <molecule>Matrix protein p17</molecule>
    <text evidence="1 6">Targets the polyprotein to the plasma membrane via a multipartite membrane-binding signal, that includes its myristoylated N-terminus (By similarity). Matrix protein is part of the pre-integration complex. Implicated in the release from host cell mediated by Vpu. Binds to RNA (By similarity).</text>
</comment>
<comment type="function">
    <molecule>Capsid protein p24</molecule>
    <text evidence="5 6">Forms the conical core that encapsulates the genomic RNA-nucleocapsid complex in the virion. Most core are conical, with only 7% tubular. The core is constituted by capsid protein hexamer subunits. The core is disassembled soon after virion entry (By similarity). The capsid promotes immune invasion by cloaking viral DNA from CGAS detection (By similarity). Host restriction factors such as TRIM5-alpha or TRIMCyp bind retroviral capsids and cause premature capsid disassembly, leading to blocks in reverse transcription. Capsid restriction by TRIM5 is one of the factors which restricts HIV-1 to the human species. Host PIN1 apparently facilitates the virion uncoating (By similarity). On the other hand, interactions with PDZD8 or CYPA stabilize the capsid (By similarity).</text>
</comment>
<comment type="function">
    <molecule>Nucleocapsid protein p7</molecule>
    <text evidence="5">Encapsulates and protects viral dimeric unspliced genomic RNA (gRNA). Binds these RNAs through its zinc fingers. Acts as a nucleic acid chaperone which is involved in rearangement of nucleic acid secondary structure during gRNA retrotranscription. Also facilitates template switch leading to recombination. As part of the polyprotein, participates in gRNA dimerization, packaging, tRNA incorporation and virion assembly.</text>
</comment>
<comment type="function">
    <molecule>p6-gag</molecule>
    <text evidence="6">Plays a role in budding of the assembled particle by interacting with the host class E VPS proteins TSG101 and PDCD6IP/AIP1.</text>
</comment>
<comment type="subunit">
    <molecule>Gag polyprotein</molecule>
    <text evidence="4 5">Homotrimer; further assembles as hexamers of trimers. Oligomerization possibly creates a central hole into which the cytoplasmic tail of the gp41 envelope protein may be inserted. Interacts with host TRIM22; this interaction seems to disrupt proper trafficking of Gag polyprotein and may interfere with budding. Interacts with host PDZD8. When ubiquitinated, interacts (via p6-gag domain) with host PACSIN2; this interaction allows PACSIN2 recruitment to viral assembly sites and its subsequent incorporation into virions. Interacts with MOV10 (By similarity).</text>
</comment>
<comment type="subunit">
    <molecule>Matrix protein p17</molecule>
    <text evidence="5 6">Homotrimer; further assembles as hexamers of trimers. Interacts with gp41 (via C-terminus). Interacts with host CALM1; this interaction induces a conformational change in the Matrix protein, triggering exposure of the myristate group. Interacts with host AP3D1; this interaction allows the polyprotein trafficking to multivesicular bodies during virus assembly. Part of the pre-integration complex (PIC) which is composed of viral genome, matrix protein, Vpr and integrase.</text>
</comment>
<comment type="subunit">
    <molecule>Capsid protein p24</molecule>
    <text evidence="5 6">Homodimer; the homodimer further multimerizes as homohexamers or homopentamers (By similarity). Interacts with host NUP98 (By similarity). Interacts with host PPIA/CYPA; this interaction stabilizes the capsid (By similarity). Interacts with host NUP153 (By similarity). Interacts with host PDZD8; this interaction stabilizes the capsid. Interacts with host TRIM5; this interaction destabilizes the capsid (By similarity). Interacts with host CPSF6 (By similarity). Interacts with host NONO; the interaction is weak (By similarity).</text>
</comment>
<comment type="subunit">
    <molecule>Nucleocapsid protein p7</molecule>
    <text evidence="6">Interacts with host NUP98.</text>
</comment>
<comment type="subunit">
    <molecule>p6-gag</molecule>
    <text evidence="3 6">Interacts with Vpr; this interaction allows Vpr incorporation into the virion. Interacts with host TSG101. p6-gag interacts with host PDCD6IP/AIP1.</text>
</comment>
<comment type="subcellular location">
    <molecule>Gag polyprotein</molecule>
    <subcellularLocation>
        <location evidence="6">Host cell membrane</location>
        <topology evidence="6">Lipid-anchor</topology>
    </subcellularLocation>
    <subcellularLocation>
        <location evidence="6">Host endosome</location>
        <location evidence="6">Host multivesicular body</location>
    </subcellularLocation>
    <text evidence="6">These locations are probably linked to virus assembly sites. The main location is the cell membrane, but under some circumstances, late endosomal compartments can serve as productive sites for virion assembly.</text>
</comment>
<comment type="subcellular location">
    <molecule>Matrix protein p17</molecule>
    <subcellularLocation>
        <location evidence="6">Virion membrane</location>
        <topology evidence="6">Lipid-anchor</topology>
    </subcellularLocation>
    <subcellularLocation>
        <location evidence="1">Host nucleus</location>
    </subcellularLocation>
    <subcellularLocation>
        <location evidence="1">Host cytoplasm</location>
    </subcellularLocation>
</comment>
<comment type="subcellular location">
    <molecule>Capsid protein p24</molecule>
    <subcellularLocation>
        <location evidence="6">Virion</location>
    </subcellularLocation>
</comment>
<comment type="subcellular location">
    <molecule>Nucleocapsid protein p7</molecule>
    <subcellularLocation>
        <location evidence="6">Virion</location>
    </subcellularLocation>
</comment>
<comment type="alternative products">
    <event type="ribosomal frameshifting"/>
    <isoform>
        <id>P0C1K7-1</id>
        <name>Gag polyprotein</name>
        <sequence type="displayed"/>
    </isoform>
    <isoform>
        <id>O41798-1</id>
        <name>Gag-Pol polyprotein</name>
        <sequence type="external"/>
    </isoform>
    <text>Translation results in the formation of the Gag polyprotein most of the time. Ribosomal frameshifting at the gag-pol genes boundary occurs at low frequency and produces the Gag-Pol polyprotein. This strategy of translation probably allows the virus to modulate the quantity of each viral protein. Maintenance of a correct Gag to Gag-Pol ratio is essential for RNA dimerization and viral infectivity.</text>
</comment>
<comment type="domain">
    <text evidence="6">Late-budding domains (L domains) are short sequence motifs essential for viral particle budding. They recruit proteins of the host ESCRT machinery (Endosomal Sorting Complex Required for Transport) or ESCRT-associated proteins. p6-gag contains two L domains: a PTAP/PSAP motif, which interacts with the UEV domain of TSG101 and a LYPX(n)L motif which interacts with PDCD6IP/AIP1.</text>
</comment>
<comment type="PTM">
    <text evidence="6">Gag-Pol polyprotein: Specific enzymatic cleavages by the viral protease yield mature proteins.</text>
</comment>
<comment type="PTM">
    <molecule>Matrix protein p17</molecule>
    <text evidence="5">Tyrosine phosphorylated presumably in the virion by a host kinase. Phosphorylation is apparently not a major regulator of membrane association.</text>
</comment>
<comment type="PTM">
    <text evidence="6">Capsid protein p24 is phosphorylated possibly by host MAPK1; this phosphorylation is necessary for Pin1-mediated virion uncoating.</text>
</comment>
<comment type="PTM">
    <text evidence="2">Nucleocapsid protein p7 is methylated by host PRMT6, impairing its function by reducing RNA annealing and the initiation of reverse transcription.</text>
</comment>
<comment type="miscellaneous">
    <text>HIV-1 lineages are divided in three main groups, M (for Major), O (for Outlier), and N (for New, or Non-M, Non-O). The vast majority of strains found worldwide belong to the group M. Group O seems to be endemic to and largely confined to Cameroon and neighboring countries in West Central Africa, where these viruses represent a small minority of HIV-1 strains. The group N is represented by a limited number of isolates from Cameroonian persons. The group M is further subdivided in 9 clades or subtypes (A to D, F to H, J and K).</text>
</comment>
<comment type="miscellaneous">
    <molecule>Isoform Gag polyprotein</molecule>
    <text>Produced by conventional translation.</text>
</comment>
<comment type="similarity">
    <text evidence="10">Belongs to the primate lentivirus group gag polyprotein family.</text>
</comment>
<feature type="initiator methionine" description="Removed; by host" evidence="1">
    <location>
        <position position="1"/>
    </location>
</feature>
<feature type="chain" id="PRO_0000261203" description="Gag polyprotein">
    <location>
        <begin position="2"/>
        <end position="497"/>
    </location>
</feature>
<feature type="chain" id="PRO_0000246338" description="Matrix protein p17" evidence="1">
    <location>
        <begin position="2"/>
        <end position="131"/>
    </location>
</feature>
<feature type="chain" id="PRO_0000246339" description="Capsid protein p24" evidence="1">
    <location>
        <begin position="132"/>
        <end position="362"/>
    </location>
</feature>
<feature type="peptide" id="PRO_0000246340" description="Spacer peptide 1" evidence="1">
    <location>
        <begin position="363"/>
        <end position="378"/>
    </location>
</feature>
<feature type="chain" id="PRO_0000246341" description="Nucleocapsid protein p7" evidence="1">
    <location>
        <begin position="379"/>
        <end position="433"/>
    </location>
</feature>
<feature type="peptide" id="PRO_0000246342" description="Spacer peptide 2" evidence="1">
    <location>
        <begin position="434"/>
        <end position="449"/>
    </location>
</feature>
<feature type="chain" id="PRO_0000246343" description="p6-gag" evidence="1">
    <location>
        <begin position="450"/>
        <end position="497"/>
    </location>
</feature>
<feature type="zinc finger region" description="CCHC-type 1" evidence="8">
    <location>
        <begin position="391"/>
        <end position="408"/>
    </location>
</feature>
<feature type="zinc finger region" description="CCHC-type 2" evidence="8">
    <location>
        <begin position="412"/>
        <end position="429"/>
    </location>
</feature>
<feature type="region of interest" description="Interaction with Gp41" evidence="6">
    <location>
        <begin position="7"/>
        <end position="31"/>
    </location>
</feature>
<feature type="region of interest" description="Interaction with host CALM1" evidence="5">
    <location>
        <begin position="8"/>
        <end position="43"/>
    </location>
</feature>
<feature type="region of interest" description="Interaction with host AP3D1" evidence="7">
    <location>
        <begin position="12"/>
        <end position="19"/>
    </location>
</feature>
<feature type="region of interest" description="Interaction with membrane phosphatidylinositol 4,5-bisphosphate and RNA" evidence="6">
    <location>
        <begin position="14"/>
        <end position="33"/>
    </location>
</feature>
<feature type="region of interest" description="Interaction with membrane phosphatidylinositol 4,5-bisphosphate" evidence="6">
    <location>
        <begin position="72"/>
        <end position="76"/>
    </location>
</feature>
<feature type="region of interest" description="Disordered" evidence="9">
    <location>
        <begin position="107"/>
        <end position="126"/>
    </location>
</feature>
<feature type="region of interest" description="Interaction with host PPIA/CYPA and NUP153" evidence="6">
    <location>
        <begin position="188"/>
        <end position="226"/>
    </location>
</feature>
<feature type="region of interest" description="PPIA/CYPA-binding loop" evidence="5">
    <location>
        <begin position="216"/>
        <end position="224"/>
    </location>
</feature>
<feature type="region of interest" description="Dimerization/Multimerization of capsid protein p24" evidence="5">
    <location>
        <begin position="276"/>
        <end position="362"/>
    </location>
</feature>
<feature type="region of interest" description="Disordered" evidence="9">
    <location>
        <begin position="440"/>
        <end position="497"/>
    </location>
</feature>
<feature type="short sequence motif" description="Nuclear export signal" evidence="1">
    <location>
        <begin position="16"/>
        <end position="22"/>
    </location>
</feature>
<feature type="short sequence motif" description="Nuclear localization signal" evidence="1">
    <location>
        <begin position="26"/>
        <end position="32"/>
    </location>
</feature>
<feature type="short sequence motif" description="PTAP/PSAP motif">
    <location>
        <begin position="456"/>
        <end position="459"/>
    </location>
</feature>
<feature type="short sequence motif" description="LYPX(n)L motif">
    <location>
        <begin position="483"/>
        <end position="492"/>
    </location>
</feature>
<feature type="compositionally biased region" description="Polar residues" evidence="9">
    <location>
        <begin position="108"/>
        <end position="126"/>
    </location>
</feature>
<feature type="site" description="Cleavage; by viral protease" evidence="1">
    <location>
        <begin position="131"/>
        <end position="132"/>
    </location>
</feature>
<feature type="site" description="Cleavage; by viral protease" evidence="1">
    <location>
        <begin position="362"/>
        <end position="363"/>
    </location>
</feature>
<feature type="site" description="Cleavage; by viral protease" evidence="1">
    <location>
        <begin position="378"/>
        <end position="379"/>
    </location>
</feature>
<feature type="site" description="Cleavage; by viral protease" evidence="1">
    <location>
        <begin position="433"/>
        <end position="434"/>
    </location>
</feature>
<feature type="site" description="Cleavage; by viral protease" evidence="1">
    <location>
        <begin position="449"/>
        <end position="450"/>
    </location>
</feature>
<feature type="modified residue" description="Phosphoserine; by host MAPK1" evidence="6">
    <location>
        <position position="147"/>
    </location>
</feature>
<feature type="modified residue" description="Asymmetric dimethylarginine; in Nucleocapsid protein p7; by host PRMT6" evidence="1">
    <location>
        <position position="388"/>
    </location>
</feature>
<feature type="modified residue" description="Asymmetric dimethylarginine; in Nucleocapsid protein p7; by host PRMT6" evidence="1">
    <location>
        <position position="410"/>
    </location>
</feature>
<feature type="lipid moiety-binding region" description="N-myristoyl glycine; by host" evidence="1">
    <location>
        <position position="2"/>
    </location>
</feature>
<proteinExistence type="inferred from homology"/>
<reference key="1">
    <citation type="journal article" date="1998" name="J. Virol.">
        <title>A comprehensive panel of near-full-length clones and reference sequences for non-subtype B isolates of human immunodeficiency virus type 1.</title>
        <authorList>
            <person name="Gao F."/>
            <person name="Robertson D.L."/>
            <person name="Carruthers C.D."/>
            <person name="Morrison S.G."/>
            <person name="Jian B."/>
            <person name="Chen Y."/>
            <person name="Barre-Sinoussi F."/>
            <person name="Girard M."/>
            <person name="Srinivasan A."/>
            <person name="Abimiku A.G."/>
            <person name="Shaw G.M."/>
            <person name="Sharp P.M."/>
            <person name="Hahn B.H."/>
        </authorList>
    </citation>
    <scope>NUCLEOTIDE SEQUENCE [GENOMIC DNA]</scope>
</reference>
<dbReference type="EMBL" id="U88826">
    <property type="status" value="NOT_ANNOTATED_CDS"/>
    <property type="molecule type" value="Genomic_DNA"/>
</dbReference>
<dbReference type="SMR" id="P0C1K7"/>
<dbReference type="PRO" id="PR:P0C1K7"/>
<dbReference type="Proteomes" id="UP000128912">
    <property type="component" value="Segment"/>
</dbReference>
<dbReference type="GO" id="GO:0042025">
    <property type="term" value="C:host cell nucleus"/>
    <property type="evidence" value="ECO:0007669"/>
    <property type="project" value="UniProtKB-SubCell"/>
</dbReference>
<dbReference type="GO" id="GO:0020002">
    <property type="term" value="C:host cell plasma membrane"/>
    <property type="evidence" value="ECO:0007669"/>
    <property type="project" value="UniProtKB-SubCell"/>
</dbReference>
<dbReference type="GO" id="GO:0072494">
    <property type="term" value="C:host multivesicular body"/>
    <property type="evidence" value="ECO:0007669"/>
    <property type="project" value="UniProtKB-SubCell"/>
</dbReference>
<dbReference type="GO" id="GO:0016020">
    <property type="term" value="C:membrane"/>
    <property type="evidence" value="ECO:0007669"/>
    <property type="project" value="UniProtKB-KW"/>
</dbReference>
<dbReference type="GO" id="GO:0019013">
    <property type="term" value="C:viral nucleocapsid"/>
    <property type="evidence" value="ECO:0007669"/>
    <property type="project" value="UniProtKB-KW"/>
</dbReference>
<dbReference type="GO" id="GO:0055036">
    <property type="term" value="C:virion membrane"/>
    <property type="evidence" value="ECO:0007669"/>
    <property type="project" value="UniProtKB-SubCell"/>
</dbReference>
<dbReference type="GO" id="GO:0003723">
    <property type="term" value="F:RNA binding"/>
    <property type="evidence" value="ECO:0007669"/>
    <property type="project" value="UniProtKB-KW"/>
</dbReference>
<dbReference type="GO" id="GO:0005198">
    <property type="term" value="F:structural molecule activity"/>
    <property type="evidence" value="ECO:0007669"/>
    <property type="project" value="InterPro"/>
</dbReference>
<dbReference type="GO" id="GO:0008270">
    <property type="term" value="F:zinc ion binding"/>
    <property type="evidence" value="ECO:0007669"/>
    <property type="project" value="UniProtKB-KW"/>
</dbReference>
<dbReference type="GO" id="GO:0039702">
    <property type="term" value="P:viral budding via host ESCRT complex"/>
    <property type="evidence" value="ECO:0007669"/>
    <property type="project" value="UniProtKB-KW"/>
</dbReference>
<dbReference type="GO" id="GO:0075523">
    <property type="term" value="P:viral translational frameshifting"/>
    <property type="evidence" value="ECO:0007669"/>
    <property type="project" value="UniProtKB-KW"/>
</dbReference>
<dbReference type="FunFam" id="1.10.1200.30:FF:000001">
    <property type="entry name" value="Gag polyprotein"/>
    <property type="match status" value="1"/>
</dbReference>
<dbReference type="FunFam" id="1.10.375.10:FF:000001">
    <property type="entry name" value="Gag polyprotein"/>
    <property type="match status" value="1"/>
</dbReference>
<dbReference type="FunFam" id="4.10.60.10:FF:000001">
    <property type="entry name" value="Gag polyprotein"/>
    <property type="match status" value="1"/>
</dbReference>
<dbReference type="Gene3D" id="1.10.1200.30">
    <property type="match status" value="1"/>
</dbReference>
<dbReference type="Gene3D" id="6.10.250.390">
    <property type="match status" value="1"/>
</dbReference>
<dbReference type="Gene3D" id="1.10.375.10">
    <property type="entry name" value="Human Immunodeficiency Virus Type 1 Capsid Protein"/>
    <property type="match status" value="1"/>
</dbReference>
<dbReference type="Gene3D" id="1.10.150.90">
    <property type="entry name" value="Immunodeficiency lentiviruses, gag gene matrix protein p17"/>
    <property type="match status" value="1"/>
</dbReference>
<dbReference type="Gene3D" id="1.20.5.760">
    <property type="entry name" value="Single helix bin"/>
    <property type="match status" value="1"/>
</dbReference>
<dbReference type="Gene3D" id="4.10.60.10">
    <property type="entry name" value="Zinc finger, CCHC-type"/>
    <property type="match status" value="1"/>
</dbReference>
<dbReference type="InterPro" id="IPR045345">
    <property type="entry name" value="Gag_p24_C"/>
</dbReference>
<dbReference type="InterPro" id="IPR014817">
    <property type="entry name" value="Gag_p6"/>
</dbReference>
<dbReference type="InterPro" id="IPR000071">
    <property type="entry name" value="Lentvrl_matrix_N"/>
</dbReference>
<dbReference type="InterPro" id="IPR012344">
    <property type="entry name" value="Matrix_HIV/RSV_N"/>
</dbReference>
<dbReference type="InterPro" id="IPR050195">
    <property type="entry name" value="Primate_lentivir_Gag_pol-like"/>
</dbReference>
<dbReference type="InterPro" id="IPR008916">
    <property type="entry name" value="Retrov_capsid_C"/>
</dbReference>
<dbReference type="InterPro" id="IPR008919">
    <property type="entry name" value="Retrov_capsid_N"/>
</dbReference>
<dbReference type="InterPro" id="IPR010999">
    <property type="entry name" value="Retrovr_matrix"/>
</dbReference>
<dbReference type="InterPro" id="IPR001878">
    <property type="entry name" value="Znf_CCHC"/>
</dbReference>
<dbReference type="InterPro" id="IPR036875">
    <property type="entry name" value="Znf_CCHC_sf"/>
</dbReference>
<dbReference type="PANTHER" id="PTHR40389:SF4">
    <property type="match status" value="1"/>
</dbReference>
<dbReference type="PANTHER" id="PTHR40389">
    <property type="entry name" value="ENDOGENOUS RETROVIRUS GROUP K MEMBER 24 GAG POLYPROTEIN-RELATED"/>
    <property type="match status" value="1"/>
</dbReference>
<dbReference type="Pfam" id="PF00540">
    <property type="entry name" value="Gag_p17"/>
    <property type="match status" value="1"/>
</dbReference>
<dbReference type="Pfam" id="PF19317">
    <property type="entry name" value="Gag_p24_C"/>
    <property type="match status" value="1"/>
</dbReference>
<dbReference type="Pfam" id="PF08705">
    <property type="entry name" value="Gag_p6"/>
    <property type="match status" value="1"/>
</dbReference>
<dbReference type="Pfam" id="PF00098">
    <property type="entry name" value="zf-CCHC"/>
    <property type="match status" value="2"/>
</dbReference>
<dbReference type="PRINTS" id="PR00234">
    <property type="entry name" value="HIV1MATRIX"/>
</dbReference>
<dbReference type="SMART" id="SM00343">
    <property type="entry name" value="ZnF_C2HC"/>
    <property type="match status" value="2"/>
</dbReference>
<dbReference type="SUPFAM" id="SSF47836">
    <property type="entry name" value="Retroviral matrix proteins"/>
    <property type="match status" value="1"/>
</dbReference>
<dbReference type="SUPFAM" id="SSF47353">
    <property type="entry name" value="Retrovirus capsid dimerization domain-like"/>
    <property type="match status" value="1"/>
</dbReference>
<dbReference type="SUPFAM" id="SSF47943">
    <property type="entry name" value="Retrovirus capsid protein, N-terminal core domain"/>
    <property type="match status" value="1"/>
</dbReference>
<dbReference type="SUPFAM" id="SSF57756">
    <property type="entry name" value="Retrovirus zinc finger-like domains"/>
    <property type="match status" value="1"/>
</dbReference>
<dbReference type="PROSITE" id="PS50158">
    <property type="entry name" value="ZF_CCHC"/>
    <property type="match status" value="2"/>
</dbReference>
<evidence type="ECO:0000250" key="1"/>
<evidence type="ECO:0000250" key="2">
    <source>
        <dbReference type="UniProtKB" id="P03347"/>
    </source>
</evidence>
<evidence type="ECO:0000250" key="3">
    <source>
        <dbReference type="UniProtKB" id="P03348"/>
    </source>
</evidence>
<evidence type="ECO:0000250" key="4">
    <source>
        <dbReference type="UniProtKB" id="P03349"/>
    </source>
</evidence>
<evidence type="ECO:0000250" key="5">
    <source>
        <dbReference type="UniProtKB" id="P04591"/>
    </source>
</evidence>
<evidence type="ECO:0000250" key="6">
    <source>
        <dbReference type="UniProtKB" id="P12493"/>
    </source>
</evidence>
<evidence type="ECO:0000250" key="7">
    <source>
        <dbReference type="UniProtKB" id="P12497"/>
    </source>
</evidence>
<evidence type="ECO:0000255" key="8">
    <source>
        <dbReference type="PROSITE-ProRule" id="PRU00047"/>
    </source>
</evidence>
<evidence type="ECO:0000256" key="9">
    <source>
        <dbReference type="SAM" id="MobiDB-lite"/>
    </source>
</evidence>
<evidence type="ECO:0000305" key="10"/>
<keyword id="KW-0014">AIDS</keyword>
<keyword id="KW-0167">Capsid protein</keyword>
<keyword id="KW-1032">Host cell membrane</keyword>
<keyword id="KW-1035">Host cytoplasm</keyword>
<keyword id="KW-1039">Host endosome</keyword>
<keyword id="KW-1043">Host membrane</keyword>
<keyword id="KW-1048">Host nucleus</keyword>
<keyword id="KW-0945">Host-virus interaction</keyword>
<keyword id="KW-0449">Lipoprotein</keyword>
<keyword id="KW-0472">Membrane</keyword>
<keyword id="KW-0479">Metal-binding</keyword>
<keyword id="KW-0488">Methylation</keyword>
<keyword id="KW-0519">Myristate</keyword>
<keyword id="KW-0597">Phosphoprotein</keyword>
<keyword id="KW-0677">Repeat</keyword>
<keyword id="KW-0688">Ribosomal frameshifting</keyword>
<keyword id="KW-0694">RNA-binding</keyword>
<keyword id="KW-1198">Viral budding</keyword>
<keyword id="KW-1187">Viral budding via the host ESCRT complexes</keyword>
<keyword id="KW-0543">Viral nucleoprotein</keyword>
<keyword id="KW-1188">Viral release from host cell</keyword>
<keyword id="KW-0946">Virion</keyword>
<keyword id="KW-0862">Zinc</keyword>
<keyword id="KW-0863">Zinc-finger</keyword>
<organism>
    <name type="scientific">Human immunodeficiency virus type 1 group M subtype G (isolate 92NG083)</name>
    <name type="common">HIV-1</name>
    <dbReference type="NCBI Taxonomy" id="388825"/>
    <lineage>
        <taxon>Viruses</taxon>
        <taxon>Riboviria</taxon>
        <taxon>Pararnavirae</taxon>
        <taxon>Artverviricota</taxon>
        <taxon>Revtraviricetes</taxon>
        <taxon>Ortervirales</taxon>
        <taxon>Retroviridae</taxon>
        <taxon>Orthoretrovirinae</taxon>
        <taxon>Lentivirus</taxon>
        <taxon>Human immunodeficiency virus type 1</taxon>
    </lineage>
</organism>
<organismHost>
    <name type="scientific">Homo sapiens</name>
    <name type="common">Human</name>
    <dbReference type="NCBI Taxonomy" id="9606"/>
</organismHost>
<accession>P0C1K7</accession>
<gene>
    <name type="primary">gag</name>
</gene>
<protein>
    <recommendedName>
        <fullName>Gag polyprotein</fullName>
    </recommendedName>
    <alternativeName>
        <fullName>Pr55Gag</fullName>
    </alternativeName>
    <component>
        <recommendedName>
            <fullName>Matrix protein p17</fullName>
            <shortName>MA</shortName>
        </recommendedName>
    </component>
    <component>
        <recommendedName>
            <fullName>Capsid protein p24</fullName>
            <shortName>CA</shortName>
        </recommendedName>
    </component>
    <component>
        <recommendedName>
            <fullName evidence="6">Spacer peptide 1</fullName>
            <shortName>SP1</shortName>
        </recommendedName>
        <alternativeName>
            <fullName>p2</fullName>
        </alternativeName>
    </component>
    <component>
        <recommendedName>
            <fullName>Nucleocapsid protein p7</fullName>
            <shortName>NC</shortName>
        </recommendedName>
    </component>
    <component>
        <recommendedName>
            <fullName evidence="6">Spacer peptide 2</fullName>
            <shortName>SP2</shortName>
        </recommendedName>
        <alternativeName>
            <fullName>p1</fullName>
        </alternativeName>
    </component>
    <component>
        <recommendedName>
            <fullName>p6-gag</fullName>
        </recommendedName>
    </component>
</protein>